<sequence length="1114" mass="121551">MGVQGFQDYIEKHCPSAVVPVELQKLARGSLVGGGRQRPPHTPLRLLVDADNCLHRLYGGFYTDWVSGGQWNHMLGYLAALAKACFGGNIELFVFFNGALEKARLHEWVKRQGNERQTAQQIVSHVQNKGTPPPKVWFLPPVCMAHCIRLALIRFHVKVAQSIEDHHQEVIGFCRENGFHGLVAYDSDYALCNIPYYFSAHALKLSRNGKSLTTSQYLMHEVAKQLDLNPNRFPIFAALLGNHILPDEDLASFHWSLLGPEHPLASLKVRAHQLVLPPCDVVIKAVADYVRNIQDTSDLDAIAKDVFQHSQSRTDDKVIRFKRAIGYYSATSKPMAFHPPHYLARPNPFGMPGIVPPYVPPQMLNIPQTSLQAKPVAPQVPSPGAPGQGPHPYNLAEPALTLETSGKNLTEQNYSNIPHEGKHTPLYERSSPINPAPSGSPNHVDSAYFPGSSTSSSSDNDEGSGGAANHISGNKIGWEKTGSHSEPQARGDPGDQTKAEGSSTASSGSQLAEGKGNQIGTVQPIPCLLSMPTRNHMDITTPPLPPVAPEVLRVAEHRHKKGLMYPYIFHVLTKGEIKIAVSIEDEASKDLPPAALLYRPVRQYVYGVLFSLAESRKKTERLAFRKNRLPPEFSPVIIKEWAAYKGKSPQTPELVEALAFREWTCPNLKRLWLGKAVEDKNRRMRAFLACMRSDTPAMLNPASVPTHLTVLCCVLRYMVQWPGARILRRQELDAFLAQALSPKLYEPDQLQELKIENLDPRGIQLSALFMSGVDMALFANDACGQPVPWEHCCPWMYFDGKLFQSKLLKASREKTPLIDLCDGQAEQAAKVEKMRQSILEGLNFSRQSHPLPFPPPAALPFYPTSVYPRHFGPVPPAQGRGRGFAGVCGFGSPYGETVATGAYRAFRVATATGHCGAFSGSDSSRTSKSQGGIQPIPSQGGKLEIAGTVVGHWAGSRRGRGGRGPFPLQVVSVGGPARGRPRGVISTPVIRTFGRGGRYYGRGYKNQGAIQGKPPYAASAEEVAKELKSRSGESKSSAMSSDGSLAENGVVAEEKPAPQMNGSAGDTRAPSHSESALNNDSKTCNTNPHLNALSTDSGCRRADALEAAVLKKEE</sequence>
<name>F120A_BOVIN</name>
<accession>A6H7H1</accession>
<dbReference type="EMBL" id="BC146243">
    <property type="protein sequence ID" value="AAI46244.1"/>
    <property type="molecule type" value="mRNA"/>
</dbReference>
<dbReference type="RefSeq" id="NP_001092375.1">
    <property type="nucleotide sequence ID" value="NM_001098905.1"/>
</dbReference>
<dbReference type="SMR" id="A6H7H1"/>
<dbReference type="FunCoup" id="A6H7H1">
    <property type="interactions" value="2563"/>
</dbReference>
<dbReference type="STRING" id="9913.ENSBTAP00000030923"/>
<dbReference type="PaxDb" id="9913-ENSBTAP00000030923"/>
<dbReference type="PeptideAtlas" id="A6H7H1"/>
<dbReference type="GeneID" id="507997"/>
<dbReference type="KEGG" id="bta:507997"/>
<dbReference type="CTD" id="23196"/>
<dbReference type="eggNOG" id="ENOG502QQNQ">
    <property type="taxonomic scope" value="Eukaryota"/>
</dbReference>
<dbReference type="InParanoid" id="A6H7H1"/>
<dbReference type="OrthoDB" id="10061469at2759"/>
<dbReference type="Proteomes" id="UP000009136">
    <property type="component" value="Unplaced"/>
</dbReference>
<dbReference type="GO" id="GO:0005737">
    <property type="term" value="C:cytoplasm"/>
    <property type="evidence" value="ECO:0007669"/>
    <property type="project" value="UniProtKB-SubCell"/>
</dbReference>
<dbReference type="GO" id="GO:0005634">
    <property type="term" value="C:nucleus"/>
    <property type="evidence" value="ECO:0000318"/>
    <property type="project" value="GO_Central"/>
</dbReference>
<dbReference type="GO" id="GO:0005886">
    <property type="term" value="C:plasma membrane"/>
    <property type="evidence" value="ECO:0007669"/>
    <property type="project" value="UniProtKB-SubCell"/>
</dbReference>
<dbReference type="GO" id="GO:0003723">
    <property type="term" value="F:RNA binding"/>
    <property type="evidence" value="ECO:0007669"/>
    <property type="project" value="UniProtKB-KW"/>
</dbReference>
<dbReference type="FunFam" id="3.40.50.1010:FF:000009">
    <property type="entry name" value="Constitutive coactivator of PPAR-gamma-like protein 1"/>
    <property type="match status" value="1"/>
</dbReference>
<dbReference type="Gene3D" id="3.40.50.1010">
    <property type="entry name" value="5'-nuclease"/>
    <property type="match status" value="1"/>
</dbReference>
<dbReference type="InterPro" id="IPR026784">
    <property type="entry name" value="Coact_PPARg"/>
</dbReference>
<dbReference type="InterPro" id="IPR029060">
    <property type="entry name" value="PIN-like_dom_sf"/>
</dbReference>
<dbReference type="PANTHER" id="PTHR15976">
    <property type="entry name" value="CONSTITUTIVE COACTIVATOR OF PEROXISOME PROLIFERATOR-ACTIVATED RECEPTOR GAMMA"/>
    <property type="match status" value="1"/>
</dbReference>
<dbReference type="PANTHER" id="PTHR15976:SF14">
    <property type="entry name" value="CONSTITUTIVE COACTIVATOR OF PPAR-GAMMA-LIKE PROTEIN 1"/>
    <property type="match status" value="1"/>
</dbReference>
<dbReference type="SUPFAM" id="SSF88723">
    <property type="entry name" value="PIN domain-like"/>
    <property type="match status" value="1"/>
</dbReference>
<feature type="chain" id="PRO_0000363779" description="Constitutive coactivator of PPAR-gamma-like protein 1">
    <location>
        <begin position="1"/>
        <end position="1114"/>
    </location>
</feature>
<feature type="region of interest" description="Interaction with YES1, SRC and FYN" evidence="2">
    <location>
        <begin position="339"/>
        <end position="402"/>
    </location>
</feature>
<feature type="region of interest" description="Disordered" evidence="3">
    <location>
        <begin position="372"/>
        <end position="396"/>
    </location>
</feature>
<feature type="region of interest" description="Disordered" evidence="3">
    <location>
        <begin position="411"/>
        <end position="519"/>
    </location>
</feature>
<feature type="region of interest" description="RNA binding" evidence="2">
    <location>
        <begin position="825"/>
        <end position="1114"/>
    </location>
</feature>
<feature type="region of interest" description="Disordered" evidence="3">
    <location>
        <begin position="918"/>
        <end position="940"/>
    </location>
</feature>
<feature type="region of interest" description="Disordered" evidence="3">
    <location>
        <begin position="1009"/>
        <end position="1099"/>
    </location>
</feature>
<feature type="compositionally biased region" description="Polar residues" evidence="3">
    <location>
        <begin position="431"/>
        <end position="443"/>
    </location>
</feature>
<feature type="compositionally biased region" description="Basic and acidic residues" evidence="3">
    <location>
        <begin position="477"/>
        <end position="498"/>
    </location>
</feature>
<feature type="compositionally biased region" description="Polar residues" evidence="3">
    <location>
        <begin position="499"/>
        <end position="510"/>
    </location>
</feature>
<feature type="compositionally biased region" description="Low complexity" evidence="3">
    <location>
        <begin position="929"/>
        <end position="940"/>
    </location>
</feature>
<feature type="compositionally biased region" description="Basic and acidic residues" evidence="3">
    <location>
        <begin position="1022"/>
        <end position="1033"/>
    </location>
</feature>
<feature type="compositionally biased region" description="Polar residues" evidence="3">
    <location>
        <begin position="1034"/>
        <end position="1043"/>
    </location>
</feature>
<feature type="compositionally biased region" description="Polar residues" evidence="3">
    <location>
        <begin position="1060"/>
        <end position="1097"/>
    </location>
</feature>
<feature type="modified residue" description="Phosphothreonine" evidence="2">
    <location>
        <position position="651"/>
    </location>
</feature>
<feature type="modified residue" description="Omega-N-methylarginine" evidence="2">
    <location>
        <position position="869"/>
    </location>
</feature>
<feature type="modified residue" description="Omega-N-methylarginine" evidence="2">
    <location>
        <position position="880"/>
    </location>
</feature>
<feature type="modified residue" description="Omega-N-methylarginine" evidence="2">
    <location>
        <position position="882"/>
    </location>
</feature>
<feature type="modified residue" description="N6-acetyllysine" evidence="1">
    <location>
        <position position="928"/>
    </location>
</feature>
<feature type="modified residue" description="Phosphoserine" evidence="2">
    <location>
        <position position="956"/>
    </location>
</feature>
<feature type="modified residue" description="Omega-N-methylarginine" evidence="1">
    <location>
        <position position="978"/>
    </location>
</feature>
<feature type="modified residue" description="Omega-N-methylarginine" evidence="2">
    <location>
        <position position="982"/>
    </location>
</feature>
<feature type="modified residue" description="Phosphoserine" evidence="2">
    <location>
        <position position="1019"/>
    </location>
</feature>
<feature type="modified residue" description="Phosphoserine" evidence="2">
    <location>
        <position position="1040"/>
    </location>
</feature>
<feature type="modified residue" description="Phosphoserine" evidence="2">
    <location>
        <position position="1041"/>
    </location>
</feature>
<feature type="modified residue" description="Phosphoserine" evidence="2">
    <location>
        <position position="1044"/>
    </location>
</feature>
<protein>
    <recommendedName>
        <fullName>Constitutive coactivator of PPAR-gamma-like protein 1</fullName>
    </recommendedName>
    <alternativeName>
        <fullName>Oxidative stress-associated Src activator</fullName>
    </alternativeName>
    <alternativeName>
        <fullName>Protein FAM120A</fullName>
    </alternativeName>
</protein>
<gene>
    <name type="primary">FAM120A</name>
    <name type="synonym">OSSA</name>
</gene>
<reference key="1">
    <citation type="submission" date="2007-06" db="EMBL/GenBank/DDBJ databases">
        <authorList>
            <consortium name="NIH - Mammalian Gene Collection (MGC) project"/>
        </authorList>
    </citation>
    <scope>NUCLEOTIDE SEQUENCE [LARGE SCALE MRNA]</scope>
    <source>
        <strain>Hereford</strain>
        <tissue>Ascending colon</tissue>
    </source>
</reference>
<keyword id="KW-0007">Acetylation</keyword>
<keyword id="KW-1003">Cell membrane</keyword>
<keyword id="KW-0963">Cytoplasm</keyword>
<keyword id="KW-0472">Membrane</keyword>
<keyword id="KW-0488">Methylation</keyword>
<keyword id="KW-0597">Phosphoprotein</keyword>
<keyword id="KW-1185">Reference proteome</keyword>
<keyword id="KW-0694">RNA-binding</keyword>
<evidence type="ECO:0000250" key="1">
    <source>
        <dbReference type="UniProtKB" id="Q6A0A9"/>
    </source>
</evidence>
<evidence type="ECO:0000250" key="2">
    <source>
        <dbReference type="UniProtKB" id="Q9NZB2"/>
    </source>
</evidence>
<evidence type="ECO:0000256" key="3">
    <source>
        <dbReference type="SAM" id="MobiDB-lite"/>
    </source>
</evidence>
<evidence type="ECO:0000305" key="4"/>
<organism>
    <name type="scientific">Bos taurus</name>
    <name type="common">Bovine</name>
    <dbReference type="NCBI Taxonomy" id="9913"/>
    <lineage>
        <taxon>Eukaryota</taxon>
        <taxon>Metazoa</taxon>
        <taxon>Chordata</taxon>
        <taxon>Craniata</taxon>
        <taxon>Vertebrata</taxon>
        <taxon>Euteleostomi</taxon>
        <taxon>Mammalia</taxon>
        <taxon>Eutheria</taxon>
        <taxon>Laurasiatheria</taxon>
        <taxon>Artiodactyla</taxon>
        <taxon>Ruminantia</taxon>
        <taxon>Pecora</taxon>
        <taxon>Bovidae</taxon>
        <taxon>Bovinae</taxon>
        <taxon>Bos</taxon>
    </lineage>
</organism>
<proteinExistence type="evidence at transcript level"/>
<comment type="function">
    <text evidence="2">Component of the oxidative stress-induced survival signaling. May regulate the activation of SRC family protein kinases. May act as a scaffolding protein enabling SRC family protein kinases to phosphorylate and activate PI3-kinase. Binds IGF2 RNA and promotes the production of IGF2 protein.</text>
</comment>
<comment type="subunit">
    <text evidence="1 2">Interacts with PURA (By similarity). Interacts with YES1, SRC, FYN. Upon tyrosine phosphorylation, interacts with PIK3R1 (By similarity).</text>
</comment>
<comment type="subcellular location">
    <subcellularLocation>
        <location evidence="2">Cytoplasm</location>
    </subcellularLocation>
    <subcellularLocation>
        <location evidence="2">Cell membrane</location>
        <topology evidence="2">Peripheral membrane protein</topology>
        <orientation evidence="2">Cytoplasmic side</orientation>
    </subcellularLocation>
    <text evidence="2">Translocates from the cytosol to plasma membrane after UV irradiation.</text>
</comment>
<comment type="PTM">
    <text evidence="2">Arg-978 is dimethylated, probably to asymmetric dimethylarginine.</text>
</comment>
<comment type="PTM">
    <text evidence="2">Phosphorylated on tyrosine by src family kinases upon ultraviolet exposure.</text>
</comment>
<comment type="similarity">
    <text evidence="4">Belongs to the constitutive coactivator of PPAR-gamma family.</text>
</comment>